<evidence type="ECO:0000255" key="1">
    <source>
        <dbReference type="HAMAP-Rule" id="MF_01310"/>
    </source>
</evidence>
<evidence type="ECO:0000305" key="2"/>
<keyword id="KW-0687">Ribonucleoprotein</keyword>
<keyword id="KW-0689">Ribosomal protein</keyword>
<keyword id="KW-0694">RNA-binding</keyword>
<keyword id="KW-0699">rRNA-binding</keyword>
<protein>
    <recommendedName>
        <fullName evidence="1">Small ribosomal subunit protein uS11</fullName>
    </recommendedName>
    <alternativeName>
        <fullName evidence="2">30S ribosomal protein S11</fullName>
    </alternativeName>
</protein>
<proteinExistence type="inferred from homology"/>
<name>RS11_BUCAP</name>
<accession>Q8K972</accession>
<dbReference type="EMBL" id="AE013218">
    <property type="protein sequence ID" value="AAM68025.1"/>
    <property type="molecule type" value="Genomic_DNA"/>
</dbReference>
<dbReference type="RefSeq" id="WP_011053991.1">
    <property type="nucleotide sequence ID" value="NC_004061.1"/>
</dbReference>
<dbReference type="SMR" id="Q8K972"/>
<dbReference type="STRING" id="198804.BUsg_482"/>
<dbReference type="GeneID" id="93003957"/>
<dbReference type="KEGG" id="bas:BUsg_482"/>
<dbReference type="eggNOG" id="COG0100">
    <property type="taxonomic scope" value="Bacteria"/>
</dbReference>
<dbReference type="HOGENOM" id="CLU_072439_5_0_6"/>
<dbReference type="Proteomes" id="UP000000416">
    <property type="component" value="Chromosome"/>
</dbReference>
<dbReference type="GO" id="GO:1990904">
    <property type="term" value="C:ribonucleoprotein complex"/>
    <property type="evidence" value="ECO:0007669"/>
    <property type="project" value="UniProtKB-KW"/>
</dbReference>
<dbReference type="GO" id="GO:0005840">
    <property type="term" value="C:ribosome"/>
    <property type="evidence" value="ECO:0007669"/>
    <property type="project" value="UniProtKB-KW"/>
</dbReference>
<dbReference type="GO" id="GO:0019843">
    <property type="term" value="F:rRNA binding"/>
    <property type="evidence" value="ECO:0007669"/>
    <property type="project" value="UniProtKB-UniRule"/>
</dbReference>
<dbReference type="GO" id="GO:0003735">
    <property type="term" value="F:structural constituent of ribosome"/>
    <property type="evidence" value="ECO:0007669"/>
    <property type="project" value="InterPro"/>
</dbReference>
<dbReference type="GO" id="GO:0006412">
    <property type="term" value="P:translation"/>
    <property type="evidence" value="ECO:0007669"/>
    <property type="project" value="UniProtKB-UniRule"/>
</dbReference>
<dbReference type="FunFam" id="3.30.420.80:FF:000001">
    <property type="entry name" value="30S ribosomal protein S11"/>
    <property type="match status" value="1"/>
</dbReference>
<dbReference type="Gene3D" id="3.30.420.80">
    <property type="entry name" value="Ribosomal protein S11"/>
    <property type="match status" value="1"/>
</dbReference>
<dbReference type="HAMAP" id="MF_01310">
    <property type="entry name" value="Ribosomal_uS11"/>
    <property type="match status" value="1"/>
</dbReference>
<dbReference type="InterPro" id="IPR001971">
    <property type="entry name" value="Ribosomal_uS11"/>
</dbReference>
<dbReference type="InterPro" id="IPR019981">
    <property type="entry name" value="Ribosomal_uS11_bac-type"/>
</dbReference>
<dbReference type="InterPro" id="IPR018102">
    <property type="entry name" value="Ribosomal_uS11_CS"/>
</dbReference>
<dbReference type="InterPro" id="IPR036967">
    <property type="entry name" value="Ribosomal_uS11_sf"/>
</dbReference>
<dbReference type="NCBIfam" id="NF003698">
    <property type="entry name" value="PRK05309.1"/>
    <property type="match status" value="1"/>
</dbReference>
<dbReference type="NCBIfam" id="TIGR03632">
    <property type="entry name" value="uS11_bact"/>
    <property type="match status" value="1"/>
</dbReference>
<dbReference type="PANTHER" id="PTHR11759">
    <property type="entry name" value="40S RIBOSOMAL PROTEIN S14/30S RIBOSOMAL PROTEIN S11"/>
    <property type="match status" value="1"/>
</dbReference>
<dbReference type="Pfam" id="PF00411">
    <property type="entry name" value="Ribosomal_S11"/>
    <property type="match status" value="1"/>
</dbReference>
<dbReference type="PIRSF" id="PIRSF002131">
    <property type="entry name" value="Ribosomal_S11"/>
    <property type="match status" value="1"/>
</dbReference>
<dbReference type="SUPFAM" id="SSF53137">
    <property type="entry name" value="Translational machinery components"/>
    <property type="match status" value="1"/>
</dbReference>
<dbReference type="PROSITE" id="PS00054">
    <property type="entry name" value="RIBOSOMAL_S11"/>
    <property type="match status" value="1"/>
</dbReference>
<reference key="1">
    <citation type="journal article" date="2002" name="Science">
        <title>50 million years of genomic stasis in endosymbiotic bacteria.</title>
        <authorList>
            <person name="Tamas I."/>
            <person name="Klasson L."/>
            <person name="Canbaeck B."/>
            <person name="Naeslund A.K."/>
            <person name="Eriksson A.-S."/>
            <person name="Wernegreen J.J."/>
            <person name="Sandstroem J.P."/>
            <person name="Moran N.A."/>
            <person name="Andersson S.G.E."/>
        </authorList>
    </citation>
    <scope>NUCLEOTIDE SEQUENCE [LARGE SCALE GENOMIC DNA]</scope>
    <source>
        <strain>Sg</strain>
    </source>
</reference>
<gene>
    <name evidence="1" type="primary">rpsK</name>
    <name type="ordered locus">BUsg_482</name>
</gene>
<sequence length="130" mass="14095">MVKNSSVRTRKRVKKQITDGIAHIHASFNNTIVTITDRQGNALGWATSGGSGFRGSRKSTPFAAQIAAERCAEIVKDYGIKNLEVMVKGPGPGRESTIRALNAAGFRITNITDVTPIPHNGCRPPKKRRV</sequence>
<feature type="chain" id="PRO_0000123121" description="Small ribosomal subunit protein uS11">
    <location>
        <begin position="1"/>
        <end position="130"/>
    </location>
</feature>
<comment type="function">
    <text evidence="1">Located on the platform of the 30S subunit, it bridges several disparate RNA helices of the 16S rRNA. Forms part of the Shine-Dalgarno cleft in the 70S ribosome.</text>
</comment>
<comment type="subunit">
    <text evidence="1">Part of the 30S ribosomal subunit. Interacts with proteins S7 and S18. Binds to IF-3.</text>
</comment>
<comment type="similarity">
    <text evidence="1">Belongs to the universal ribosomal protein uS11 family.</text>
</comment>
<organism>
    <name type="scientific">Buchnera aphidicola subsp. Schizaphis graminum (strain Sg)</name>
    <dbReference type="NCBI Taxonomy" id="198804"/>
    <lineage>
        <taxon>Bacteria</taxon>
        <taxon>Pseudomonadati</taxon>
        <taxon>Pseudomonadota</taxon>
        <taxon>Gammaproteobacteria</taxon>
        <taxon>Enterobacterales</taxon>
        <taxon>Erwiniaceae</taxon>
        <taxon>Buchnera</taxon>
    </lineage>
</organism>